<evidence type="ECO:0000255" key="1"/>
<evidence type="ECO:0000255" key="2">
    <source>
        <dbReference type="PROSITE-ProRule" id="PRU00202"/>
    </source>
</evidence>
<evidence type="ECO:0000256" key="3">
    <source>
        <dbReference type="SAM" id="MobiDB-lite"/>
    </source>
</evidence>
<evidence type="ECO:0000269" key="4">
    <source>
    </source>
</evidence>
<evidence type="ECO:0000269" key="5">
    <source>
    </source>
</evidence>
<evidence type="ECO:0000269" key="6">
    <source>
    </source>
</evidence>
<evidence type="ECO:0000305" key="7"/>
<evidence type="ECO:0007829" key="8">
    <source>
        <dbReference type="PDB" id="1PCX"/>
    </source>
</evidence>
<gene>
    <name type="primary">BET1</name>
    <name type="synonym">SLY12</name>
    <name type="ordered locus">YIL004C</name>
    <name type="ORF">YIA4C</name>
</gene>
<accession>P22804</accession>
<accession>D6VVS6</accession>
<proteinExistence type="evidence at protein level"/>
<name>BET1_YEAST</name>
<protein>
    <recommendedName>
        <fullName>Protein transport protein BET1</fullName>
    </recommendedName>
    <alternativeName>
        <fullName>Suppressor of loss of YPT1 protein 12</fullName>
        <shortName>Protein SLY12</shortName>
    </alternativeName>
</protein>
<keyword id="KW-0002">3D-structure</keyword>
<keyword id="KW-0175">Coiled coil</keyword>
<keyword id="KW-0256">Endoplasmic reticulum</keyword>
<keyword id="KW-0931">ER-Golgi transport</keyword>
<keyword id="KW-0333">Golgi apparatus</keyword>
<keyword id="KW-0472">Membrane</keyword>
<keyword id="KW-0653">Protein transport</keyword>
<keyword id="KW-1185">Reference proteome</keyword>
<keyword id="KW-0812">Transmembrane</keyword>
<keyword id="KW-1133">Transmembrane helix</keyword>
<keyword id="KW-0813">Transport</keyword>
<organism>
    <name type="scientific">Saccharomyces cerevisiae (strain ATCC 204508 / S288c)</name>
    <name type="common">Baker's yeast</name>
    <dbReference type="NCBI Taxonomy" id="559292"/>
    <lineage>
        <taxon>Eukaryota</taxon>
        <taxon>Fungi</taxon>
        <taxon>Dikarya</taxon>
        <taxon>Ascomycota</taxon>
        <taxon>Saccharomycotina</taxon>
        <taxon>Saccharomycetes</taxon>
        <taxon>Saccharomycetales</taxon>
        <taxon>Saccharomycetaceae</taxon>
        <taxon>Saccharomyces</taxon>
    </lineage>
</organism>
<comment type="function">
    <text evidence="4 6">SNARE required for targeting and fusion of ER-derived transport vesicles with the Golgi complex.</text>
</comment>
<comment type="subunit">
    <text evidence="4 5">Component of a SNARE complex consisting of SED5, BOS1, BET1 and SEC22 or YKT6. Interacts with SEC24.</text>
</comment>
<comment type="interaction">
    <interactant intactId="EBI-3550">
        <id>P22804</id>
    </interactant>
    <interactant intactId="EBI-2684">
        <id>P38182</id>
        <label>ATG8</label>
    </interactant>
    <organismsDiffer>false</organismsDiffer>
    <experiments>2</experiments>
</comment>
<comment type="subcellular location">
    <subcellularLocation>
        <location evidence="7">Golgi apparatus membrane</location>
        <topology evidence="7">Single-pass type IV membrane protein</topology>
    </subcellularLocation>
    <subcellularLocation>
        <location evidence="7">Endoplasmic reticulum membrane</location>
        <topology evidence="7">Single-pass type IV membrane protein</topology>
    </subcellularLocation>
</comment>
<comment type="similarity">
    <text evidence="7">Belongs to the BET1 family.</text>
</comment>
<feature type="chain" id="PRO_0000206892" description="Protein transport protein BET1">
    <location>
        <begin position="1"/>
        <end position="142"/>
    </location>
</feature>
<feature type="topological domain" description="Cytoplasmic" evidence="1">
    <location>
        <begin position="1"/>
        <end position="117"/>
    </location>
</feature>
<feature type="transmembrane region" description="Helical; Anchor for type IV membrane protein" evidence="1">
    <location>
        <begin position="118"/>
        <end position="141"/>
    </location>
</feature>
<feature type="topological domain" description="Vesicular" evidence="1">
    <location>
        <position position="142"/>
    </location>
</feature>
<feature type="domain" description="t-SNARE coiled-coil homology" evidence="2">
    <location>
        <begin position="52"/>
        <end position="114"/>
    </location>
</feature>
<feature type="region of interest" description="Disordered" evidence="3">
    <location>
        <begin position="1"/>
        <end position="36"/>
    </location>
</feature>
<feature type="compositionally biased region" description="Polar residues" evidence="3">
    <location>
        <begin position="26"/>
        <end position="36"/>
    </location>
</feature>
<feature type="helix" evidence="8">
    <location>
        <begin position="52"/>
        <end position="56"/>
    </location>
</feature>
<reference key="1">
    <citation type="journal article" date="1991" name="Mol. Cell. Biol.">
        <title>Identification and structure of four yeast genes (SLY) that are able to suppress the functional loss of YPT1, a member of the RAS superfamily.</title>
        <authorList>
            <person name="Dascher C."/>
            <person name="Ossig R."/>
            <person name="Gallwitz D."/>
            <person name="Schmitt H.D."/>
        </authorList>
    </citation>
    <scope>NUCLEOTIDE SEQUENCE [GENOMIC DNA]</scope>
</reference>
<reference key="2">
    <citation type="journal article" date="1992" name="EMBO J.">
        <title>Bos1p, a membrane protein required for ER to Golgi transport in yeast, co-purifies with the carrier vesicles and with Bet1p and the ER membrane.</title>
        <authorList>
            <person name="Newman A.P."/>
            <person name="Groesch M.E."/>
            <person name="Ferro-Novick S."/>
        </authorList>
    </citation>
    <scope>NUCLEOTIDE SEQUENCE [GENOMIC DNA]</scope>
    <scope>FUNCTION</scope>
</reference>
<reference key="3">
    <citation type="journal article" date="1995" name="Yeast">
        <title>Nucleotide sequence and analysis of the centromeric region of yeast chromosome IX.</title>
        <authorList>
            <person name="Voss H."/>
            <person name="Tamames J."/>
            <person name="Teodoru C."/>
            <person name="Valencia A."/>
            <person name="Sensen C."/>
            <person name="Wiemann S."/>
            <person name="Schwager C."/>
            <person name="Zimmermann J."/>
            <person name="Sander C."/>
            <person name="Ansorge W."/>
        </authorList>
    </citation>
    <scope>NUCLEOTIDE SEQUENCE [GENOMIC DNA]</scope>
    <source>
        <strain>ATCC 204508 / S288c</strain>
    </source>
</reference>
<reference key="4">
    <citation type="journal article" date="1997" name="Nature">
        <title>The nucleotide sequence of Saccharomyces cerevisiae chromosome IX.</title>
        <authorList>
            <person name="Churcher C.M."/>
            <person name="Bowman S."/>
            <person name="Badcock K."/>
            <person name="Bankier A.T."/>
            <person name="Brown D."/>
            <person name="Chillingworth T."/>
            <person name="Connor R."/>
            <person name="Devlin K."/>
            <person name="Gentles S."/>
            <person name="Hamlin N."/>
            <person name="Harris D.E."/>
            <person name="Horsnell T."/>
            <person name="Hunt S."/>
            <person name="Jagels K."/>
            <person name="Jones M."/>
            <person name="Lye G."/>
            <person name="Moule S."/>
            <person name="Odell C."/>
            <person name="Pearson D."/>
            <person name="Rajandream M.A."/>
            <person name="Rice P."/>
            <person name="Rowley N."/>
            <person name="Skelton J."/>
            <person name="Smith V."/>
            <person name="Walsh S.V."/>
            <person name="Whitehead S."/>
            <person name="Barrell B.G."/>
        </authorList>
    </citation>
    <scope>NUCLEOTIDE SEQUENCE [LARGE SCALE GENOMIC DNA]</scope>
    <source>
        <strain>ATCC 204508 / S288c</strain>
    </source>
</reference>
<reference key="5">
    <citation type="journal article" date="2014" name="G3 (Bethesda)">
        <title>The reference genome sequence of Saccharomyces cerevisiae: Then and now.</title>
        <authorList>
            <person name="Engel S.R."/>
            <person name="Dietrich F.S."/>
            <person name="Fisk D.G."/>
            <person name="Binkley G."/>
            <person name="Balakrishnan R."/>
            <person name="Costanzo M.C."/>
            <person name="Dwight S.S."/>
            <person name="Hitz B.C."/>
            <person name="Karra K."/>
            <person name="Nash R.S."/>
            <person name="Weng S."/>
            <person name="Wong E.D."/>
            <person name="Lloyd P."/>
            <person name="Skrzypek M.S."/>
            <person name="Miyasato S.R."/>
            <person name="Simison M."/>
            <person name="Cherry J.M."/>
        </authorList>
    </citation>
    <scope>GENOME REANNOTATION</scope>
    <source>
        <strain>ATCC 204508 / S288c</strain>
    </source>
</reference>
<reference key="6">
    <citation type="journal article" date="2000" name="Nature">
        <title>Topological restriction of SNARE-dependent membrane fusion.</title>
        <authorList>
            <person name="Parlati F."/>
            <person name="McNew J.A."/>
            <person name="Fukuda R."/>
            <person name="Miller R."/>
            <person name="Sollner T.H."/>
            <person name="Rothman J.E."/>
        </authorList>
    </citation>
    <scope>FUNCTION</scope>
    <scope>INTERACTION WITH SED5; BOS1 AND SEC22</scope>
</reference>
<reference key="7">
    <citation type="journal article" date="2003" name="Cell">
        <title>SNARE selectivity of the COPII coat.</title>
        <authorList>
            <person name="Mossessova E."/>
            <person name="Bickford L.C."/>
            <person name="Goldberg J."/>
        </authorList>
    </citation>
    <scope>INTERACTION WITH SEC24</scope>
</reference>
<dbReference type="EMBL" id="Z38113">
    <property type="protein sequence ID" value="CAA86247.1"/>
    <property type="molecule type" value="Genomic_DNA"/>
</dbReference>
<dbReference type="EMBL" id="X54237">
    <property type="protein sequence ID" value="CAA38143.1"/>
    <property type="molecule type" value="Genomic_DNA"/>
</dbReference>
<dbReference type="EMBL" id="X79743">
    <property type="protein sequence ID" value="CAB38096.1"/>
    <property type="molecule type" value="Genomic_DNA"/>
</dbReference>
<dbReference type="EMBL" id="BK006942">
    <property type="protein sequence ID" value="DAA08542.1"/>
    <property type="molecule type" value="Genomic_DNA"/>
</dbReference>
<dbReference type="PIR" id="C39610">
    <property type="entry name" value="C39610"/>
</dbReference>
<dbReference type="RefSeq" id="NP_012262.3">
    <property type="nucleotide sequence ID" value="NM_001179354.3"/>
</dbReference>
<dbReference type="PDB" id="1PCX">
    <property type="method" value="X-ray"/>
    <property type="resolution" value="2.50 A"/>
    <property type="chains" value="B=51-58"/>
</dbReference>
<dbReference type="PDBsum" id="1PCX"/>
<dbReference type="SMR" id="P22804"/>
<dbReference type="BioGRID" id="34988">
    <property type="interactions" value="287"/>
</dbReference>
<dbReference type="ComplexPortal" id="CPX-1854">
    <property type="entry name" value="Golgi SNARE complex SED5-BOS1-BET1-SEC22"/>
</dbReference>
<dbReference type="DIP" id="DIP-2050N"/>
<dbReference type="FunCoup" id="P22804">
    <property type="interactions" value="313"/>
</dbReference>
<dbReference type="IntAct" id="P22804">
    <property type="interactions" value="10"/>
</dbReference>
<dbReference type="MINT" id="P22804"/>
<dbReference type="STRING" id="4932.YIL004C"/>
<dbReference type="iPTMnet" id="P22804"/>
<dbReference type="PaxDb" id="4932-YIL004C"/>
<dbReference type="PeptideAtlas" id="P22804"/>
<dbReference type="TopDownProteomics" id="P22804"/>
<dbReference type="EnsemblFungi" id="YIL004C_mRNA">
    <property type="protein sequence ID" value="YIL004C"/>
    <property type="gene ID" value="YIL004C"/>
</dbReference>
<dbReference type="GeneID" id="854813"/>
<dbReference type="KEGG" id="sce:YIL004C"/>
<dbReference type="AGR" id="SGD:S000001266"/>
<dbReference type="SGD" id="S000001266">
    <property type="gene designation" value="BET1"/>
</dbReference>
<dbReference type="VEuPathDB" id="FungiDB:YIL004C"/>
<dbReference type="eggNOG" id="KOG3385">
    <property type="taxonomic scope" value="Eukaryota"/>
</dbReference>
<dbReference type="GeneTree" id="ENSGT00940000163414"/>
<dbReference type="HOGENOM" id="CLU_086133_1_1_1"/>
<dbReference type="InParanoid" id="P22804"/>
<dbReference type="OMA" id="FFWVWIT"/>
<dbReference type="OrthoDB" id="261831at2759"/>
<dbReference type="BioCyc" id="YEAST:G3O-31283-MONOMER"/>
<dbReference type="Reactome" id="R-SCE-204005">
    <property type="pathway name" value="COPII-mediated vesicle transport"/>
</dbReference>
<dbReference type="Reactome" id="R-SCE-6807878">
    <property type="pathway name" value="COPI-mediated anterograde transport"/>
</dbReference>
<dbReference type="Reactome" id="R-SCE-6811438">
    <property type="pathway name" value="Intra-Golgi traffic"/>
</dbReference>
<dbReference type="BioGRID-ORCS" id="854813">
    <property type="hits" value="9 hits in 10 CRISPR screens"/>
</dbReference>
<dbReference type="EvolutionaryTrace" id="P22804"/>
<dbReference type="PRO" id="PR:P22804"/>
<dbReference type="Proteomes" id="UP000002311">
    <property type="component" value="Chromosome IX"/>
</dbReference>
<dbReference type="RNAct" id="P22804">
    <property type="molecule type" value="protein"/>
</dbReference>
<dbReference type="GO" id="GO:0030134">
    <property type="term" value="C:COPII-coated ER to Golgi transport vesicle"/>
    <property type="evidence" value="ECO:0000314"/>
    <property type="project" value="SGD"/>
</dbReference>
<dbReference type="GO" id="GO:0005789">
    <property type="term" value="C:endoplasmic reticulum membrane"/>
    <property type="evidence" value="ECO:0000314"/>
    <property type="project" value="SGD"/>
</dbReference>
<dbReference type="GO" id="GO:0000139">
    <property type="term" value="C:Golgi membrane"/>
    <property type="evidence" value="ECO:0007669"/>
    <property type="project" value="UniProtKB-SubCell"/>
</dbReference>
<dbReference type="GO" id="GO:0016020">
    <property type="term" value="C:membrane"/>
    <property type="evidence" value="ECO:0000314"/>
    <property type="project" value="SGD"/>
</dbReference>
<dbReference type="GO" id="GO:0031201">
    <property type="term" value="C:SNARE complex"/>
    <property type="evidence" value="ECO:0000314"/>
    <property type="project" value="SGD"/>
</dbReference>
<dbReference type="GO" id="GO:0005484">
    <property type="term" value="F:SNAP receptor activity"/>
    <property type="evidence" value="ECO:0000314"/>
    <property type="project" value="SGD"/>
</dbReference>
<dbReference type="GO" id="GO:0006888">
    <property type="term" value="P:endoplasmic reticulum to Golgi vesicle-mediated transport"/>
    <property type="evidence" value="ECO:0000315"/>
    <property type="project" value="SGD"/>
</dbReference>
<dbReference type="GO" id="GO:0006886">
    <property type="term" value="P:intracellular protein transport"/>
    <property type="evidence" value="ECO:0000314"/>
    <property type="project" value="ComplexPortal"/>
</dbReference>
<dbReference type="GO" id="GO:0006890">
    <property type="term" value="P:retrograde vesicle-mediated transport, Golgi to endoplasmic reticulum"/>
    <property type="evidence" value="ECO:0000314"/>
    <property type="project" value="SGD"/>
</dbReference>
<dbReference type="GO" id="GO:0006906">
    <property type="term" value="P:vesicle fusion"/>
    <property type="evidence" value="ECO:0000314"/>
    <property type="project" value="SGD"/>
</dbReference>
<dbReference type="GO" id="GO:0048280">
    <property type="term" value="P:vesicle fusion with Golgi apparatus"/>
    <property type="evidence" value="ECO:0000314"/>
    <property type="project" value="ComplexPortal"/>
</dbReference>
<dbReference type="CDD" id="cd15853">
    <property type="entry name" value="SNARE_Bet1"/>
    <property type="match status" value="1"/>
</dbReference>
<dbReference type="FunFam" id="1.20.5.110:FF:000089">
    <property type="entry name" value="Golgi vesicular membrane trafficking protein"/>
    <property type="match status" value="1"/>
</dbReference>
<dbReference type="Gene3D" id="1.20.5.110">
    <property type="match status" value="1"/>
</dbReference>
<dbReference type="InterPro" id="IPR039899">
    <property type="entry name" value="BET1_SNARE"/>
</dbReference>
<dbReference type="InterPro" id="IPR000727">
    <property type="entry name" value="T_SNARE_dom"/>
</dbReference>
<dbReference type="PANTHER" id="PTHR12791">
    <property type="entry name" value="GOLGI SNARE BET1-RELATED"/>
    <property type="match status" value="1"/>
</dbReference>
<dbReference type="SMART" id="SM00397">
    <property type="entry name" value="t_SNARE"/>
    <property type="match status" value="1"/>
</dbReference>
<dbReference type="SUPFAM" id="SSF58038">
    <property type="entry name" value="SNARE fusion complex"/>
    <property type="match status" value="1"/>
</dbReference>
<dbReference type="PROSITE" id="PS50192">
    <property type="entry name" value="T_SNARE"/>
    <property type="match status" value="1"/>
</dbReference>
<sequence>MSSRFAGGNAYQRDTGRTQLFGPADGSNSLDDNVSSALGSTDKLDYSQSTLASLESQSEEQMGAMGQRIKALKSLSLKMGDEIRGSNQTIDQLGDTFHNTSVKLKRTFGNMMEMARRSGISIKTWLIIFFMVGVLFFWVWIT</sequence>